<dbReference type="EMBL" id="L33878">
    <property type="protein sequence ID" value="AAC42026.1"/>
    <property type="molecule type" value="mRNA"/>
</dbReference>
<dbReference type="EMBL" id="U22465">
    <property type="protein sequence ID" value="AAC52361.1"/>
    <property type="molecule type" value="mRNA"/>
</dbReference>
<dbReference type="EMBL" id="CT009762">
    <property type="status" value="NOT_ANNOTATED_CDS"/>
    <property type="molecule type" value="Genomic_DNA"/>
</dbReference>
<dbReference type="EMBL" id="U56664">
    <property type="protein sequence ID" value="AAC52684.1"/>
    <property type="status" value="ALT_INIT"/>
    <property type="molecule type" value="Genomic_DNA"/>
</dbReference>
<dbReference type="EMBL" id="U56665">
    <property type="protein sequence ID" value="AAC52685.1"/>
    <property type="molecule type" value="Genomic_DNA"/>
</dbReference>
<dbReference type="EMBL" id="U56666">
    <property type="protein sequence ID" value="AAC52686.1"/>
    <property type="molecule type" value="Genomic_DNA"/>
</dbReference>
<dbReference type="EMBL" id="U56667">
    <property type="protein sequence ID" value="AAC52687.1"/>
    <property type="molecule type" value="Genomic_DNA"/>
</dbReference>
<dbReference type="EMBL" id="U56668">
    <property type="protein sequence ID" value="AAC52688.1"/>
    <property type="molecule type" value="Genomic_DNA"/>
</dbReference>
<dbReference type="EMBL" id="U56669">
    <property type="status" value="NOT_ANNOTATED_CDS"/>
    <property type="molecule type" value="Genomic_DNA"/>
</dbReference>
<dbReference type="EMBL" id="U56670">
    <property type="protein sequence ID" value="AAC52689.1"/>
    <property type="molecule type" value="Genomic_DNA"/>
</dbReference>
<dbReference type="EMBL" id="U56671">
    <property type="protein sequence ID" value="AAC52690.1"/>
    <property type="molecule type" value="Genomic_DNA"/>
</dbReference>
<dbReference type="EMBL" id="U56672">
    <property type="protein sequence ID" value="AAC52691.1"/>
    <property type="molecule type" value="Genomic_DNA"/>
</dbReference>
<dbReference type="EMBL" id="U56673">
    <property type="protein sequence ID" value="AAC52692.1"/>
    <property type="molecule type" value="Genomic_DNA"/>
</dbReference>
<dbReference type="CCDS" id="CCDS49271.1"/>
<dbReference type="SMR" id="Q60825"/>
<dbReference type="CORUM" id="Q60825"/>
<dbReference type="FunCoup" id="Q60825">
    <property type="interactions" value="14"/>
</dbReference>
<dbReference type="IntAct" id="Q60825">
    <property type="interactions" value="11"/>
</dbReference>
<dbReference type="MINT" id="Q60825"/>
<dbReference type="STRING" id="10090.ENSMUSP00000153038"/>
<dbReference type="BindingDB" id="Q60825"/>
<dbReference type="ChEMBL" id="CHEMBL4295855"/>
<dbReference type="GlyCosmos" id="Q60825">
    <property type="glycosylation" value="2 sites, No reported glycans"/>
</dbReference>
<dbReference type="GlyGen" id="Q60825">
    <property type="glycosylation" value="4 sites, 1 O-linked glycan (1 site)"/>
</dbReference>
<dbReference type="iPTMnet" id="Q60825"/>
<dbReference type="PhosphoSitePlus" id="Q60825"/>
<dbReference type="jPOST" id="Q60825"/>
<dbReference type="PaxDb" id="10090-ENSMUSP00000059138"/>
<dbReference type="PeptideAtlas" id="Q60825"/>
<dbReference type="ProteomicsDB" id="293956"/>
<dbReference type="AGR" id="MGI:1345284"/>
<dbReference type="MGI" id="MGI:1345284">
    <property type="gene designation" value="Slc34a1"/>
</dbReference>
<dbReference type="eggNOG" id="ENOG502QQ3I">
    <property type="taxonomic scope" value="Eukaryota"/>
</dbReference>
<dbReference type="InParanoid" id="Q60825"/>
<dbReference type="Reactome" id="R-MMU-427589">
    <property type="pathway name" value="Type II Na+/Pi cotransporters"/>
</dbReference>
<dbReference type="Reactome" id="R-MMU-5683826">
    <property type="pathway name" value="Surfactant metabolism"/>
</dbReference>
<dbReference type="ChiTaRS" id="Slc34a1">
    <property type="organism name" value="mouse"/>
</dbReference>
<dbReference type="PRO" id="PR:Q60825"/>
<dbReference type="Proteomes" id="UP000000589">
    <property type="component" value="Unplaced"/>
</dbReference>
<dbReference type="RNAct" id="Q60825">
    <property type="molecule type" value="protein"/>
</dbReference>
<dbReference type="GO" id="GO:0016324">
    <property type="term" value="C:apical plasma membrane"/>
    <property type="evidence" value="ECO:0000314"/>
    <property type="project" value="UniProtKB"/>
</dbReference>
<dbReference type="GO" id="GO:0016323">
    <property type="term" value="C:basolateral plasma membrane"/>
    <property type="evidence" value="ECO:0000314"/>
    <property type="project" value="MGI"/>
</dbReference>
<dbReference type="GO" id="GO:0005886">
    <property type="term" value="C:plasma membrane"/>
    <property type="evidence" value="ECO:0000314"/>
    <property type="project" value="MGI"/>
</dbReference>
<dbReference type="GO" id="GO:0031982">
    <property type="term" value="C:vesicle"/>
    <property type="evidence" value="ECO:0000314"/>
    <property type="project" value="MGI"/>
</dbReference>
<dbReference type="GO" id="GO:0005436">
    <property type="term" value="F:sodium:phosphate symporter activity"/>
    <property type="evidence" value="ECO:0000314"/>
    <property type="project" value="UniProtKB"/>
</dbReference>
<dbReference type="GO" id="GO:0046849">
    <property type="term" value="P:bone remodeling"/>
    <property type="evidence" value="ECO:0000315"/>
    <property type="project" value="MGI"/>
</dbReference>
<dbReference type="GO" id="GO:0055074">
    <property type="term" value="P:calcium ion homeostasis"/>
    <property type="evidence" value="ECO:0000315"/>
    <property type="project" value="MGI"/>
</dbReference>
<dbReference type="GO" id="GO:0010467">
    <property type="term" value="P:gene expression"/>
    <property type="evidence" value="ECO:0000315"/>
    <property type="project" value="MGI"/>
</dbReference>
<dbReference type="GO" id="GO:0030505">
    <property type="term" value="P:inorganic diphosphate transport"/>
    <property type="evidence" value="ECO:0000315"/>
    <property type="project" value="MGI"/>
</dbReference>
<dbReference type="GO" id="GO:0055062">
    <property type="term" value="P:phosphate ion homeostasis"/>
    <property type="evidence" value="ECO:0000314"/>
    <property type="project" value="UniProtKB"/>
</dbReference>
<dbReference type="GO" id="GO:1904383">
    <property type="term" value="P:response to sodium phosphate"/>
    <property type="evidence" value="ECO:0000315"/>
    <property type="project" value="MGI"/>
</dbReference>
<dbReference type="GO" id="GO:0044341">
    <property type="term" value="P:sodium-dependent phosphate transport"/>
    <property type="evidence" value="ECO:0007669"/>
    <property type="project" value="InterPro"/>
</dbReference>
<dbReference type="InterPro" id="IPR003841">
    <property type="entry name" value="Na/Pi_transpt"/>
</dbReference>
<dbReference type="NCBIfam" id="TIGR01013">
    <property type="entry name" value="2a58"/>
    <property type="match status" value="1"/>
</dbReference>
<dbReference type="NCBIfam" id="NF037997">
    <property type="entry name" value="Na_Pi_symport"/>
    <property type="match status" value="2"/>
</dbReference>
<dbReference type="PANTHER" id="PTHR10010:SF21">
    <property type="entry name" value="SODIUM-DEPENDENT PHOSPHATE TRANSPORT PROTEIN 2A"/>
    <property type="match status" value="1"/>
</dbReference>
<dbReference type="PANTHER" id="PTHR10010">
    <property type="entry name" value="SOLUTE CARRIER FAMILY 34 SODIUM PHOSPHATE , MEMBER 2-RELATED"/>
    <property type="match status" value="1"/>
</dbReference>
<dbReference type="Pfam" id="PF02690">
    <property type="entry name" value="Na_Pi_cotrans"/>
    <property type="match status" value="2"/>
</dbReference>
<name>NPT2A_MOUSE</name>
<protein>
    <recommendedName>
        <fullName>Sodium-dependent phosphate transport protein 2A</fullName>
        <shortName>Sodium-phosphate transport protein 2A</shortName>
    </recommendedName>
    <alternativeName>
        <fullName>Na(+)-dependent phosphate cotransporter 2A</fullName>
    </alternativeName>
    <alternativeName>
        <fullName evidence="10">NaPi-7</fullName>
    </alternativeName>
    <alternativeName>
        <fullName>Sodium/phosphate cotransporter 2A</fullName>
        <shortName>Na(+)/Pi cotransporter 2A</shortName>
        <shortName>NaPi-2a</shortName>
    </alternativeName>
    <alternativeName>
        <fullName evidence="13">Solute carrier family 34 member 1</fullName>
    </alternativeName>
</protein>
<proteinExistence type="evidence at protein level"/>
<reference key="1">
    <citation type="journal article" date="1994" name="FASEB J.">
        <title>Molecular cloning, functional expression, tissue distribution, and in situ hybridization of the renal sodium phosphate (Na+/P(i)) transporter in the control and hypophosphatemic mouse.</title>
        <authorList>
            <person name="Collins J.F."/>
            <person name="Ghishan F.K."/>
        </authorList>
    </citation>
    <scope>NUCLEOTIDE SEQUENCE [MRNA]</scope>
    <scope>FUNCTION</scope>
    <scope>TRANSPORTER ACTIVITY</scope>
    <scope>TISSUE SPECIFICITY</scope>
    <source>
        <strain>C57BL/6J</strain>
        <tissue>Kidney cortex</tissue>
    </source>
</reference>
<reference key="2">
    <citation type="journal article" date="1995" name="Pflugers Arch.">
        <title>Transport characteristics of a murine renal Na/Pi-cotransporter.</title>
        <authorList>
            <person name="Hartmann C.M."/>
            <person name="Wagner C.A."/>
            <person name="Busch A.E."/>
            <person name="Markovich D."/>
            <person name="Biber J."/>
            <person name="Lang F."/>
            <person name="Murer H."/>
        </authorList>
    </citation>
    <scope>NUCLEOTIDE SEQUENCE [MRNA]</scope>
    <scope>FUNCTION</scope>
    <scope>TRANSPORTER ACTIVITY</scope>
    <scope>BIOPHYSICOCHEMICAL PROPERTIES</scope>
    <source>
        <strain>BALB/cJ</strain>
        <tissue>Kidney cortex</tissue>
    </source>
</reference>
<reference key="3">
    <citation type="journal article" date="2009" name="PLoS Biol.">
        <title>Lineage-specific biology revealed by a finished genome assembly of the mouse.</title>
        <authorList>
            <person name="Church D.M."/>
            <person name="Goodstadt L."/>
            <person name="Hillier L.W."/>
            <person name="Zody M.C."/>
            <person name="Goldstein S."/>
            <person name="She X."/>
            <person name="Bult C.J."/>
            <person name="Agarwala R."/>
            <person name="Cherry J.L."/>
            <person name="DiCuccio M."/>
            <person name="Hlavina W."/>
            <person name="Kapustin Y."/>
            <person name="Meric P."/>
            <person name="Maglott D."/>
            <person name="Birtle Z."/>
            <person name="Marques A.C."/>
            <person name="Graves T."/>
            <person name="Zhou S."/>
            <person name="Teague B."/>
            <person name="Potamousis K."/>
            <person name="Churas C."/>
            <person name="Place M."/>
            <person name="Herschleb J."/>
            <person name="Runnheim R."/>
            <person name="Forrest D."/>
            <person name="Amos-Landgraf J."/>
            <person name="Schwartz D.C."/>
            <person name="Cheng Z."/>
            <person name="Lindblad-Toh K."/>
            <person name="Eichler E.E."/>
            <person name="Ponting C.P."/>
        </authorList>
    </citation>
    <scope>NUCLEOTIDE SEQUENCE [LARGE SCALE GENOMIC DNA]</scope>
    <source>
        <strain>C57BL/6J</strain>
    </source>
</reference>
<reference key="4">
    <citation type="journal article" date="1996" name="Proc. Natl. Acad. Sci. U.S.A.">
        <title>Structure of murine and human renal type II Na+-phosphate cotransporter genes (Npt2 and NPT2).</title>
        <authorList>
            <person name="Hartmann C.M."/>
            <person name="Hewson A.S."/>
            <person name="Kos C.H."/>
            <person name="Hilfiker H."/>
            <person name="Soumounou Y."/>
            <person name="Murer H."/>
            <person name="Tenenhouse H.S."/>
        </authorList>
    </citation>
    <scope>NUCLEOTIDE SEQUENCE [GENOMIC DNA] OF 1-94; 110-177; 179-242; 254-312; 313-318; 332-333; 335-337 AND 349-485</scope>
    <source>
        <strain>129/Sv</strain>
    </source>
</reference>
<reference key="5">
    <citation type="journal article" date="1999" name="J. Biol. Chem.">
        <title>Identification of regulatory sequences and binding proteins in the type II sodium/phosphate cotransporter NPT2 gene responsive to dietary phosphate.</title>
        <authorList>
            <person name="Kido S."/>
            <person name="Miyamoto K."/>
            <person name="Mizobuchi H."/>
            <person name="Taketani Y."/>
            <person name="Ohkido I."/>
            <person name="Ogawa N."/>
            <person name="Kaneko Y."/>
            <person name="Harashima S."/>
            <person name="Takeda E."/>
        </authorList>
    </citation>
    <scope>INDUCTION</scope>
    <source>
        <strain>ICR</strain>
    </source>
</reference>
<reference key="6">
    <citation type="journal article" date="2002" name="J. Biol. Chem.">
        <title>A novel PDZ protein regulates the activity of guanylyl cyclase C, the heat-stable enterotoxin receptor.</title>
        <authorList>
            <person name="Scott R.O."/>
            <person name="Thelin W.R."/>
            <person name="Milgram S.L."/>
        </authorList>
    </citation>
    <scope>INTERACTION WITH NHERF4</scope>
</reference>
<reference key="7">
    <citation type="journal article" date="2010" name="Cell">
        <title>A tissue-specific atlas of mouse protein phosphorylation and expression.</title>
        <authorList>
            <person name="Huttlin E.L."/>
            <person name="Jedrychowski M.P."/>
            <person name="Elias J.E."/>
            <person name="Goswami T."/>
            <person name="Rad R."/>
            <person name="Beausoleil S.A."/>
            <person name="Villen J."/>
            <person name="Haas W."/>
            <person name="Sowa M.E."/>
            <person name="Gygi S.P."/>
        </authorList>
    </citation>
    <scope>PHOSPHORYLATION [LARGE SCALE ANALYSIS] AT SER-34; THR-621 AND SER-623</scope>
    <scope>IDENTIFICATION BY MASS SPECTROMETRY [LARGE SCALE ANALYSIS]</scope>
    <source>
        <tissue>Kidney</tissue>
    </source>
</reference>
<reference key="8">
    <citation type="journal article" date="2022" name="J. Am. Soc. Nephrol.">
        <title>Targeted Disruption of a Proximal Tubule-Specific TMEM174 Gene in Mice Causes Hyperphosphatemia and Vascular Calcification.</title>
        <authorList>
            <person name="Miyazaki-Anzai S."/>
            <person name="Keenan A.L."/>
            <person name="Blaine J."/>
            <person name="Miyazaki M."/>
        </authorList>
    </citation>
    <scope>INTERACTION WITH SLC34A1</scope>
</reference>
<reference key="9">
    <citation type="journal article" date="2022" name="Sci. Rep.">
        <title>Tmem174, a regulator of phosphate transporter prevents hyperphosphatemia.</title>
        <authorList>
            <person name="Sasaki S."/>
            <person name="Shiozaki Y."/>
            <person name="Hanazaki A."/>
            <person name="Koike M."/>
            <person name="Tanifuji K."/>
            <person name="Uga M."/>
            <person name="Kawahara K."/>
            <person name="Kaneko I."/>
            <person name="Kawamoto Y."/>
            <person name="Wiriyasermkul P."/>
            <person name="Hasegawa T."/>
            <person name="Amizuka N."/>
            <person name="Miyamoto K.I."/>
            <person name="Nagamori S."/>
            <person name="Kanai Y."/>
            <person name="Segawa H."/>
        </authorList>
    </citation>
    <scope>INTERACTION WITH SLC34A1</scope>
    <scope>SUBCELLULAR LOCATION</scope>
</reference>
<feature type="chain" id="PRO_0000068608" description="Sodium-dependent phosphate transport protein 2A">
    <location>
        <begin position="1"/>
        <end position="637"/>
    </location>
</feature>
<feature type="topological domain" description="Cytoplasmic" evidence="2">
    <location>
        <begin position="1"/>
        <end position="103"/>
    </location>
</feature>
<feature type="transmembrane region" description="Helical; Name=M1" evidence="3">
    <location>
        <begin position="104"/>
        <end position="125"/>
    </location>
</feature>
<feature type="topological domain" description="Extracellular" evidence="2">
    <location>
        <begin position="126"/>
        <end position="145"/>
    </location>
</feature>
<feature type="transmembrane region" description="Helical; Name=M2" evidence="3">
    <location>
        <begin position="146"/>
        <end position="163"/>
    </location>
</feature>
<feature type="topological domain" description="Cytoplasmic" evidence="2">
    <location>
        <begin position="164"/>
        <end position="165"/>
    </location>
</feature>
<feature type="transmembrane region" description="Helical; Name=M3" evidence="3">
    <location>
        <begin position="166"/>
        <end position="185"/>
    </location>
</feature>
<feature type="topological domain" description="Extracellular" evidence="2">
    <location>
        <begin position="186"/>
        <end position="345"/>
    </location>
</feature>
<feature type="transmembrane region" description="Helical; Name=M4" evidence="3">
    <location>
        <begin position="346"/>
        <end position="368"/>
    </location>
</feature>
<feature type="topological domain" description="Cytoplasmic" evidence="2">
    <location>
        <begin position="369"/>
        <end position="410"/>
    </location>
</feature>
<feature type="transmembrane region" description="Helical; Name=M5" evidence="3">
    <location>
        <begin position="411"/>
        <end position="434"/>
    </location>
</feature>
<feature type="topological domain" description="Extracellular" evidence="2">
    <location>
        <begin position="435"/>
        <end position="464"/>
    </location>
</feature>
<feature type="transmembrane region" description="Helical; Name=M6" evidence="3">
    <location>
        <begin position="465"/>
        <end position="485"/>
    </location>
</feature>
<feature type="topological domain" description="Cytoplasmic" evidence="2">
    <location>
        <begin position="486"/>
        <end position="511"/>
    </location>
</feature>
<feature type="transmembrane region" description="Helical; Name=M7" evidence="3">
    <location>
        <begin position="512"/>
        <end position="532"/>
    </location>
</feature>
<feature type="topological domain" description="Extracellular" evidence="2">
    <location>
        <begin position="533"/>
        <end position="537"/>
    </location>
</feature>
<feature type="transmembrane region" description="Helical; Name=M8" evidence="3">
    <location>
        <begin position="538"/>
        <end position="559"/>
    </location>
</feature>
<feature type="topological domain" description="Cytoplasmic" evidence="2">
    <location>
        <begin position="560"/>
        <end position="637"/>
    </location>
</feature>
<feature type="modified residue" description="Phosphoserine" evidence="2">
    <location>
        <position position="14"/>
    </location>
</feature>
<feature type="modified residue" description="Phosphoserine" evidence="14">
    <location>
        <position position="34"/>
    </location>
</feature>
<feature type="modified residue" description="Phosphothreonine; by PKC" evidence="3">
    <location>
        <position position="506"/>
    </location>
</feature>
<feature type="modified residue" description="Phosphoserine" evidence="2">
    <location>
        <position position="605"/>
    </location>
</feature>
<feature type="modified residue" description="Phosphothreonine" evidence="14">
    <location>
        <position position="621"/>
    </location>
</feature>
<feature type="modified residue" description="Phosphoserine" evidence="14">
    <location>
        <position position="623"/>
    </location>
</feature>
<feature type="glycosylation site" description="N-linked (GlcNAc...) asparagine" evidence="3">
    <location>
        <position position="298"/>
    </location>
</feature>
<feature type="glycosylation site" description="N-linked (GlcNAc...) asparagine" evidence="3">
    <location>
        <position position="328"/>
    </location>
</feature>
<feature type="disulfide bond" evidence="2">
    <location>
        <begin position="225"/>
        <end position="520"/>
    </location>
</feature>
<feature type="disulfide bond" evidence="2">
    <location>
        <begin position="306"/>
        <end position="334"/>
    </location>
</feature>
<feature type="sequence conflict" description="In Ref. 1; AAC42026." evidence="11" ref="1">
    <original>G</original>
    <variation>A</variation>
    <location>
        <position position="324"/>
    </location>
</feature>
<feature type="sequence conflict" description="In Ref. 2; AAC52361." evidence="11" ref="2">
    <original>D</original>
    <variation>A</variation>
    <location>
        <position position="345"/>
    </location>
</feature>
<feature type="sequence conflict" description="In Ref. 1; AAC42026, 2; AAC52361 and 4; AAC52690." evidence="11" ref="1 2 4">
    <original>V</original>
    <variation>VA</variation>
    <location>
        <position position="379"/>
    </location>
</feature>
<feature type="sequence conflict" description="In Ref. 1; AAC42026." evidence="11" ref="1">
    <original>MSSRRSSTQT</original>
    <variation>NVIQKVINTD</variation>
    <location>
        <begin position="380"/>
        <end position="389"/>
    </location>
</feature>
<feature type="sequence conflict" description="In Ref. 2; AAC52361 and 4; AAC52690." evidence="11" ref="2 4">
    <location>
        <position position="390"/>
    </location>
</feature>
<feature type="sequence conflict" description="In Ref. 1; AAC42026." evidence="11" ref="1">
    <original>G</original>
    <variation>D</variation>
    <location>
        <position position="444"/>
    </location>
</feature>
<feature type="sequence conflict" description="In Ref. 1; AAC42026 and 2; AAC52361." evidence="11" ref="1 2">
    <original>L</original>
    <variation>V</variation>
    <location>
        <position position="458"/>
    </location>
</feature>
<accession>Q60825</accession>
<accession>E9QKA0</accession>
<accession>Q62110</accession>
<accession>Q62111</accession>
<accession>Q62112</accession>
<accession>Q62113</accession>
<accession>Q62114</accession>
<accession>Q62115</accession>
<accession>Q62116</accession>
<accession>Q62564</accession>
<keyword id="KW-1003">Cell membrane</keyword>
<keyword id="KW-1015">Disulfide bond</keyword>
<keyword id="KW-0325">Glycoprotein</keyword>
<keyword id="KW-0406">Ion transport</keyword>
<keyword id="KW-0472">Membrane</keyword>
<keyword id="KW-0597">Phosphoprotein</keyword>
<keyword id="KW-1185">Reference proteome</keyword>
<keyword id="KW-0915">Sodium</keyword>
<keyword id="KW-0739">Sodium transport</keyword>
<keyword id="KW-0769">Symport</keyword>
<keyword id="KW-0812">Transmembrane</keyword>
<keyword id="KW-1133">Transmembrane helix</keyword>
<keyword id="KW-0813">Transport</keyword>
<evidence type="ECO:0000250" key="1">
    <source>
        <dbReference type="UniProtKB" id="Q06495"/>
    </source>
</evidence>
<evidence type="ECO:0000250" key="2">
    <source>
        <dbReference type="UniProtKB" id="Q06496"/>
    </source>
</evidence>
<evidence type="ECO:0000255" key="3"/>
<evidence type="ECO:0000269" key="4">
    <source>
    </source>
</evidence>
<evidence type="ECO:0000269" key="5">
    <source>
    </source>
</evidence>
<evidence type="ECO:0000269" key="6">
    <source>
    </source>
</evidence>
<evidence type="ECO:0000269" key="7">
    <source>
    </source>
</evidence>
<evidence type="ECO:0000269" key="8">
    <source>
    </source>
</evidence>
<evidence type="ECO:0000269" key="9">
    <source>
    </source>
</evidence>
<evidence type="ECO:0000303" key="10">
    <source>
    </source>
</evidence>
<evidence type="ECO:0000305" key="11"/>
<evidence type="ECO:0000305" key="12">
    <source>
    </source>
</evidence>
<evidence type="ECO:0000312" key="13">
    <source>
        <dbReference type="MGI" id="MGI:1345284"/>
    </source>
</evidence>
<evidence type="ECO:0007744" key="14">
    <source>
    </source>
</evidence>
<comment type="function">
    <text evidence="2 8 9">Involved in actively transporting phosphate into cells via Na(+) cotransport in the renal brush border membrane (PubMed:7478940, PubMed:8070635). The cotransport has a Na(+):Pi stoichiometry of 3:1 and is electrogenic (By similarity).</text>
</comment>
<comment type="catalytic activity">
    <reaction evidence="8 9">
        <text>3 Na(+)(out) + phosphate(out) = 3 Na(+)(in) + phosphate(in)</text>
        <dbReference type="Rhea" id="RHEA:71255"/>
        <dbReference type="ChEBI" id="CHEBI:29101"/>
        <dbReference type="ChEBI" id="CHEBI:43474"/>
    </reaction>
    <physiologicalReaction direction="left-to-right" evidence="12">
        <dbReference type="Rhea" id="RHEA:71256"/>
    </physiologicalReaction>
</comment>
<comment type="biophysicochemical properties">
    <kinetics>
        <KM evidence="8">79.6 mM for sodium (at pH 6.3 and a phosphate concentration of 1 mM)</KM>
        <KM evidence="8">37.5 mM for sodium (at pH 7.4 and a phosphate concentration of 1 mM)</KM>
        <KM evidence="8">41.7 mM for sodium (at pH 7.4 and a phosphate concentration of 0.3 mM)</KM>
        <KM evidence="8">48.7 mM for sodium (at pH 7.8 and a phosphate concentration of 1 mM)</KM>
        <KM evidence="8">0.07 mM for phosphate (at a sodium concentration of 100 mM)</KM>
        <KM evidence="8">0.47 mM for phosphate (at a sodium concentration of 50 mM)</KM>
    </kinetics>
</comment>
<comment type="subunit">
    <text evidence="1 5 6 7">Interacts via its C-terminal region with NHERF4 (PubMed:11950846). Interacts with NHERF1 (By similarity). Interacts with TMEM174; regulates SLC34A1 internalization by PTH and FGF23 (PubMed:35428804, PubMed:35459732).</text>
</comment>
<comment type="subcellular location">
    <subcellularLocation>
        <location evidence="6">Apical cell membrane</location>
        <topology evidence="3">Multi-pass membrane protein</topology>
    </subcellularLocation>
    <subcellularLocation>
        <location evidence="2">Cell membrane</location>
        <topology evidence="3">Multi-pass membrane protein</topology>
    </subcellularLocation>
    <text evidence="2 6">Localized at the brush border membranes of the proximal tubules. Internalized from the cell surface upon PTH stimulation (PubMed:35428804).</text>
</comment>
<comment type="tissue specificity">
    <text evidence="9">Kidney.</text>
</comment>
<comment type="induction">
    <text evidence="4">Up-regulated by low-phosphate diet.</text>
</comment>
<comment type="similarity">
    <text evidence="11">Belongs to the SLC34A transporter family.</text>
</comment>
<comment type="sequence caution" evidence="11">
    <conflict type="erroneous initiation">
        <sequence resource="EMBL-CDS" id="AAC52684"/>
    </conflict>
    <text>Extended N-terminus.</text>
</comment>
<sequence>MMSYSERLGGPAVSPLPVRGRHMVHGATFAYVPSPQVLHRIPGTSTYAISSLSPVTLTEHSCPCGEVLECHDPLPTKLAQEEEQKPEPRLSQKLAQVGTKLLKVPLMLAFLYLFVCSLDVLSSAFQLAGGKVAGDIFKDNAILSNPVAGLVVGILVTVLVQSSSTSTSIIVSMVSSGLLEVSSAIPIIMGSNIGTSVTNTIVALMQAGDRTDFRRAFAGATVHDCFNWLSVLVLLPLEAATGYLHHVTGLVVASFNIRGGRDAPDLLKVITEPFTRLIIQLDKSVITSIAVGDESLRNHSLIRIWCHPDTTEASTSMSRVEAIGSLANTTMEKCNHIFVDTGLPDLAVGLILLAGSLVVLCTCLILLVKMLNSLLKGQVMSSRRSSTQTDFPAPFTWVTGYFAMVVGASMTFVVQSSSVFTSAITPLIGLGVISIERAYPLTLGSNIGTTTTAILAALASPREKLSSSFQIALCHFFFNISGILLWYPLPCTRLPIRMAKALGKRTAKYRWFAVLYLLVCFLLLPSLVFGISMAGWQAMVGVGTPFGALLAFVVLVNVLQSRSPGHLPKWLQTWDFLPRWMHSLQPLDGLITRATLCYARPEPRSPQLPPRVFLEELPPATPSPRLALPAHHNATRL</sequence>
<organism>
    <name type="scientific">Mus musculus</name>
    <name type="common">Mouse</name>
    <dbReference type="NCBI Taxonomy" id="10090"/>
    <lineage>
        <taxon>Eukaryota</taxon>
        <taxon>Metazoa</taxon>
        <taxon>Chordata</taxon>
        <taxon>Craniata</taxon>
        <taxon>Vertebrata</taxon>
        <taxon>Euteleostomi</taxon>
        <taxon>Mammalia</taxon>
        <taxon>Eutheria</taxon>
        <taxon>Euarchontoglires</taxon>
        <taxon>Glires</taxon>
        <taxon>Rodentia</taxon>
        <taxon>Myomorpha</taxon>
        <taxon>Muroidea</taxon>
        <taxon>Muridae</taxon>
        <taxon>Murinae</taxon>
        <taxon>Mus</taxon>
        <taxon>Mus</taxon>
    </lineage>
</organism>
<gene>
    <name evidence="13" type="primary">Slc34a1</name>
    <name evidence="10" type="synonym">Npt2</name>
    <name evidence="13" type="synonym">Slc17a2</name>
</gene>